<sequence length="33" mass="3534">MNIELIVQLTSLALITLAGPLIVALLFLKQGNL</sequence>
<evidence type="ECO:0000255" key="1">
    <source>
        <dbReference type="HAMAP-Rule" id="MF_01329"/>
    </source>
</evidence>
<evidence type="ECO:0000305" key="2"/>
<keyword id="KW-0150">Chloroplast</keyword>
<keyword id="KW-0472">Membrane</keyword>
<keyword id="KW-0602">Photosynthesis</keyword>
<keyword id="KW-0604">Photosystem II</keyword>
<keyword id="KW-0934">Plastid</keyword>
<keyword id="KW-0793">Thylakoid</keyword>
<keyword id="KW-0812">Transmembrane</keyword>
<keyword id="KW-1133">Transmembrane helix</keyword>
<dbReference type="EMBL" id="AF241282">
    <property type="protein sequence ID" value="AAF82458.1"/>
    <property type="molecule type" value="Genomic_DNA"/>
</dbReference>
<dbReference type="SMR" id="Q9MS60"/>
<dbReference type="GO" id="GO:0009535">
    <property type="term" value="C:chloroplast thylakoid membrane"/>
    <property type="evidence" value="ECO:0007669"/>
    <property type="project" value="UniProtKB-SubCell"/>
</dbReference>
<dbReference type="GO" id="GO:0009523">
    <property type="term" value="C:photosystem II"/>
    <property type="evidence" value="ECO:0007669"/>
    <property type="project" value="UniProtKB-KW"/>
</dbReference>
<dbReference type="GO" id="GO:0015979">
    <property type="term" value="P:photosynthesis"/>
    <property type="evidence" value="ECO:0007669"/>
    <property type="project" value="UniProtKB-KW"/>
</dbReference>
<dbReference type="HAMAP" id="MF_01329">
    <property type="entry name" value="PSII_Psb30_Ycf12"/>
    <property type="match status" value="1"/>
</dbReference>
<dbReference type="InterPro" id="IPR010284">
    <property type="entry name" value="PSII_Ycf12_core-subunit"/>
</dbReference>
<dbReference type="NCBIfam" id="NF010239">
    <property type="entry name" value="PRK13686.1"/>
    <property type="match status" value="1"/>
</dbReference>
<dbReference type="Pfam" id="PF05969">
    <property type="entry name" value="PSII_Ycf12"/>
    <property type="match status" value="1"/>
</dbReference>
<geneLocation type="chloroplast"/>
<feature type="chain" id="PRO_0000059024" description="Photosystem II reaction center protein Psb30">
    <location>
        <begin position="1"/>
        <end position="33"/>
    </location>
</feature>
<feature type="transmembrane region" description="Helical" evidence="1">
    <location>
        <begin position="5"/>
        <end position="25"/>
    </location>
</feature>
<accession>Q9MS60</accession>
<gene>
    <name evidence="1" type="primary">psb30</name>
    <name evidence="1" type="synonym">ycf12</name>
</gene>
<comment type="function">
    <text evidence="1">A core subunit of photosystem II (PSII), probably helps stabilize the reaction center.</text>
</comment>
<comment type="subunit">
    <text evidence="2">PSII is composed of 1 copy each of membrane proteins PsbA, PsbB, PsbC, PsbD, PsbE, PsbF, PsbH, PsbI, PsbJ, PsbK, PsbL, PsbM, PsbT, PsbY, PsbZ, Psb30/Ycf12, peripheral proteins of the oxygen-evolving complex and a large number of cofactors. It forms dimeric complexes.</text>
</comment>
<comment type="subcellular location">
    <subcellularLocation>
        <location evidence="1">Plastid</location>
        <location evidence="1">Chloroplast thylakoid membrane</location>
        <topology evidence="1">Single-pass membrane protein</topology>
    </subcellularLocation>
</comment>
<comment type="similarity">
    <text evidence="1">Belongs to the Psb30/Ycf12 family.</text>
</comment>
<name>PSB30_EUGSA</name>
<protein>
    <recommendedName>
        <fullName evidence="1">Photosystem II reaction center protein Psb30</fullName>
    </recommendedName>
    <alternativeName>
        <fullName evidence="1">Photosystem II reaction center protein Ycf12</fullName>
    </alternativeName>
</protein>
<reference key="1">
    <citation type="journal article" date="2001" name="Mol. Gen. Genet.">
        <title>Comparison of psbK operon organization and group III intron content in chloroplast genomes of 12 Euglenoid species.</title>
        <authorList>
            <person name="Doetsch N.A."/>
            <person name="Thompson M.D."/>
            <person name="Favreau M.R."/>
            <person name="Hallick R.B."/>
        </authorList>
    </citation>
    <scope>NUCLEOTIDE SEQUENCE [GENOMIC DNA]</scope>
    <source>
        <strain>UTEX 2345</strain>
    </source>
</reference>
<proteinExistence type="inferred from homology"/>
<organism>
    <name type="scientific">Euglena sanguinea</name>
    <dbReference type="NCBI Taxonomy" id="130315"/>
    <lineage>
        <taxon>Eukaryota</taxon>
        <taxon>Discoba</taxon>
        <taxon>Euglenozoa</taxon>
        <taxon>Euglenida</taxon>
        <taxon>Spirocuta</taxon>
        <taxon>Euglenophyceae</taxon>
        <taxon>Euglenales</taxon>
        <taxon>Euglenaceae</taxon>
        <taxon>Euglena</taxon>
    </lineage>
</organism>